<comment type="function">
    <text evidence="1 3">Mediates influx of magnesium ions (By similarity). Alternates between open and closed states. Activated by low cytoplasmic Mg(2+) levels. Inactive when cytoplasmic Mg(2+) levels are high (By similarity).</text>
</comment>
<comment type="catalytic activity">
    <reaction evidence="1">
        <text>Mg(2+)(in) = Mg(2+)(out)</text>
        <dbReference type="Rhea" id="RHEA:29827"/>
        <dbReference type="ChEBI" id="CHEBI:18420"/>
    </reaction>
</comment>
<comment type="subunit">
    <text evidence="3">Homopentamer. In the absence of Mg(2+), interactions between subunits are weakened, and dimers, trimers and tetramers can be observed in vitro (By similarity).</text>
</comment>
<comment type="subcellular location">
    <subcellularLocation>
        <location evidence="2">Cell inner membrane</location>
        <topology evidence="3">Multi-pass membrane protein</topology>
    </subcellularLocation>
</comment>
<comment type="domain">
    <text evidence="3">The central ion permeation pathway is formed by the first transmembrane domain from each of the five subunits. Mg(2+) binding strengthens interactions between subunits and leads to the formation of a symmetrical homopentamer surrounding a closed ion permeation pathway. Low Mg(2+) concentrations trigger both a conformation change within each subunit and a loosening of the interactions between subunits. This results in an open ion conduction pathway. In addition, this results in a less symmetrical shape of the whole complex.</text>
</comment>
<comment type="similarity">
    <text evidence="5">Belongs to the CorA metal ion transporter (MIT) (TC 1.A.35) family.</text>
</comment>
<dbReference type="EMBL" id="CP000025">
    <property type="protein sequence ID" value="AAW34611.1"/>
    <property type="molecule type" value="Genomic_DNA"/>
</dbReference>
<dbReference type="RefSeq" id="WP_002873011.1">
    <property type="nucleotide sequence ID" value="NC_003912.7"/>
</dbReference>
<dbReference type="SMR" id="Q5HV55"/>
<dbReference type="KEGG" id="cjr:CJE0826"/>
<dbReference type="HOGENOM" id="CLU_007127_5_0_7"/>
<dbReference type="GO" id="GO:0005886">
    <property type="term" value="C:plasma membrane"/>
    <property type="evidence" value="ECO:0007669"/>
    <property type="project" value="UniProtKB-SubCell"/>
</dbReference>
<dbReference type="GO" id="GO:0015087">
    <property type="term" value="F:cobalt ion transmembrane transporter activity"/>
    <property type="evidence" value="ECO:0007669"/>
    <property type="project" value="InterPro"/>
</dbReference>
<dbReference type="GO" id="GO:0015095">
    <property type="term" value="F:magnesium ion transmembrane transporter activity"/>
    <property type="evidence" value="ECO:0007669"/>
    <property type="project" value="InterPro"/>
</dbReference>
<dbReference type="GO" id="GO:0015099">
    <property type="term" value="F:nickel cation transmembrane transporter activity"/>
    <property type="evidence" value="ECO:0007669"/>
    <property type="project" value="TreeGrafter"/>
</dbReference>
<dbReference type="FunFam" id="1.20.58.340:FF:000001">
    <property type="entry name" value="Magnesium transport protein CorA"/>
    <property type="match status" value="1"/>
</dbReference>
<dbReference type="Gene3D" id="3.30.460.20">
    <property type="entry name" value="CorA soluble domain-like"/>
    <property type="match status" value="1"/>
</dbReference>
<dbReference type="Gene3D" id="1.20.58.340">
    <property type="entry name" value="Magnesium transport protein CorA, transmembrane region"/>
    <property type="match status" value="2"/>
</dbReference>
<dbReference type="InterPro" id="IPR045861">
    <property type="entry name" value="CorA_cytoplasmic_dom"/>
</dbReference>
<dbReference type="InterPro" id="IPR050829">
    <property type="entry name" value="CorA_MIT"/>
</dbReference>
<dbReference type="InterPro" id="IPR045863">
    <property type="entry name" value="CorA_TM1_TM2"/>
</dbReference>
<dbReference type="InterPro" id="IPR004488">
    <property type="entry name" value="Mg/Co-transport_prot_CorA"/>
</dbReference>
<dbReference type="InterPro" id="IPR002523">
    <property type="entry name" value="MgTranspt_CorA/ZnTranspt_ZntB"/>
</dbReference>
<dbReference type="NCBIfam" id="TIGR00383">
    <property type="entry name" value="corA"/>
    <property type="match status" value="1"/>
</dbReference>
<dbReference type="PANTHER" id="PTHR47685">
    <property type="entry name" value="MAGNESIUM TRANSPORT PROTEIN CORA"/>
    <property type="match status" value="1"/>
</dbReference>
<dbReference type="PANTHER" id="PTHR47685:SF1">
    <property type="entry name" value="MAGNESIUM TRANSPORT PROTEIN CORA"/>
    <property type="match status" value="1"/>
</dbReference>
<dbReference type="Pfam" id="PF01544">
    <property type="entry name" value="CorA"/>
    <property type="match status" value="1"/>
</dbReference>
<dbReference type="SUPFAM" id="SSF143865">
    <property type="entry name" value="CorA soluble domain-like"/>
    <property type="match status" value="1"/>
</dbReference>
<dbReference type="SUPFAM" id="SSF144083">
    <property type="entry name" value="Magnesium transport protein CorA, transmembrane region"/>
    <property type="match status" value="1"/>
</dbReference>
<sequence length="327" mass="38202">MLYIYIKTQNALVQRINFNLDSQELPQNILWIDLLHPSAAEIAFISSEFNLEFPTKEEREEIELSAKYWEDNATITINAHFLVRDLKNDEEDRNLIKLRTEIVTFATAKNILFTIRYNEFSTFEEIQARILASPKNFEDGFDIIDKMFEVRVEKDADLLEWIDKEARRLRTSVLEKKDEYSYDEMLKDISSLQELNMRVRDSLFDKRRAMTSLLKSDKIDKDIKQNLTIVLKDLNSLVEFSVSQLNILDNIQTILASQINIEQNKIIKIFTVATVAMMPPTLIGTVYGMNFKFMPELELHYAYPIVLGVMVISIILPLVVFKKKGWL</sequence>
<protein>
    <recommendedName>
        <fullName>Magnesium transport protein CorA</fullName>
    </recommendedName>
</protein>
<name>CORA_CAMJR</name>
<evidence type="ECO:0000250" key="1">
    <source>
        <dbReference type="UniProtKB" id="P0ABI4"/>
    </source>
</evidence>
<evidence type="ECO:0000250" key="2">
    <source>
        <dbReference type="UniProtKB" id="Q7VRM7"/>
    </source>
</evidence>
<evidence type="ECO:0000250" key="3">
    <source>
        <dbReference type="UniProtKB" id="Q9WZ31"/>
    </source>
</evidence>
<evidence type="ECO:0000255" key="4"/>
<evidence type="ECO:0000305" key="5"/>
<reference key="1">
    <citation type="journal article" date="2005" name="PLoS Biol.">
        <title>Major structural differences and novel potential virulence mechanisms from the genomes of multiple Campylobacter species.</title>
        <authorList>
            <person name="Fouts D.E."/>
            <person name="Mongodin E.F."/>
            <person name="Mandrell R.E."/>
            <person name="Miller W.G."/>
            <person name="Rasko D.A."/>
            <person name="Ravel J."/>
            <person name="Brinkac L.M."/>
            <person name="DeBoy R.T."/>
            <person name="Parker C.T."/>
            <person name="Daugherty S.C."/>
            <person name="Dodson R.J."/>
            <person name="Durkin A.S."/>
            <person name="Madupu R."/>
            <person name="Sullivan S.A."/>
            <person name="Shetty J.U."/>
            <person name="Ayodeji M.A."/>
            <person name="Shvartsbeyn A."/>
            <person name="Schatz M.C."/>
            <person name="Badger J.H."/>
            <person name="Fraser C.M."/>
            <person name="Nelson K.E."/>
        </authorList>
    </citation>
    <scope>NUCLEOTIDE SEQUENCE [LARGE SCALE GENOMIC DNA]</scope>
    <source>
        <strain>RM1221</strain>
    </source>
</reference>
<organism>
    <name type="scientific">Campylobacter jejuni (strain RM1221)</name>
    <dbReference type="NCBI Taxonomy" id="195099"/>
    <lineage>
        <taxon>Bacteria</taxon>
        <taxon>Pseudomonadati</taxon>
        <taxon>Campylobacterota</taxon>
        <taxon>Epsilonproteobacteria</taxon>
        <taxon>Campylobacterales</taxon>
        <taxon>Campylobacteraceae</taxon>
        <taxon>Campylobacter</taxon>
    </lineage>
</organism>
<proteinExistence type="inferred from homology"/>
<feature type="chain" id="PRO_0000239092" description="Magnesium transport protein CorA">
    <location>
        <begin position="1"/>
        <end position="327"/>
    </location>
</feature>
<feature type="transmembrane region" description="Helical" evidence="4">
    <location>
        <begin position="269"/>
        <end position="289"/>
    </location>
</feature>
<feature type="transmembrane region" description="Helical" evidence="4">
    <location>
        <begin position="301"/>
        <end position="321"/>
    </location>
</feature>
<feature type="short sequence motif" description="Probable selectivity filter" evidence="3">
    <location>
        <begin position="288"/>
        <end position="290"/>
    </location>
</feature>
<feature type="site" description="Essential for ion permeation" evidence="3">
    <location>
        <position position="264"/>
    </location>
</feature>
<keyword id="KW-0997">Cell inner membrane</keyword>
<keyword id="KW-1003">Cell membrane</keyword>
<keyword id="KW-0406">Ion transport</keyword>
<keyword id="KW-0460">Magnesium</keyword>
<keyword id="KW-0472">Membrane</keyword>
<keyword id="KW-0812">Transmembrane</keyword>
<keyword id="KW-1133">Transmembrane helix</keyword>
<keyword id="KW-0813">Transport</keyword>
<accession>Q5HV55</accession>
<gene>
    <name type="primary">corA</name>
    <name type="ordered locus">CJE0826</name>
</gene>